<protein>
    <recommendedName>
        <fullName>Attractin-like protein 1</fullName>
    </recommendedName>
</protein>
<dbReference type="EMBL" id="AY688677">
    <property type="protein sequence ID" value="AAT99560.1"/>
    <property type="molecule type" value="mRNA"/>
</dbReference>
<dbReference type="EMBL" id="AK172967">
    <property type="protein sequence ID" value="BAD32245.1"/>
    <property type="status" value="ALT_INIT"/>
    <property type="molecule type" value="mRNA"/>
</dbReference>
<dbReference type="EMBL" id="AK050882">
    <property type="protein sequence ID" value="BAC34442.1"/>
    <property type="molecule type" value="mRNA"/>
</dbReference>
<dbReference type="EMBL" id="AK147492">
    <property type="protein sequence ID" value="BAE27947.1"/>
    <property type="molecule type" value="mRNA"/>
</dbReference>
<dbReference type="EMBL" id="BC030872">
    <property type="protein sequence ID" value="AAH30872.1"/>
    <property type="molecule type" value="mRNA"/>
</dbReference>
<dbReference type="EMBL" id="BC050020">
    <property type="protein sequence ID" value="AAH50020.1"/>
    <property type="molecule type" value="mRNA"/>
</dbReference>
<dbReference type="CCDS" id="CCDS29928.1">
    <molecule id="Q6A051-1"/>
</dbReference>
<dbReference type="RefSeq" id="NP_852080.3">
    <molecule id="Q6A051-1"/>
    <property type="nucleotide sequence ID" value="NM_181415.4"/>
</dbReference>
<dbReference type="SMR" id="Q6A051"/>
<dbReference type="BioGRID" id="230494">
    <property type="interactions" value="1"/>
</dbReference>
<dbReference type="CORUM" id="Q6A051"/>
<dbReference type="FunCoup" id="Q6A051">
    <property type="interactions" value="1501"/>
</dbReference>
<dbReference type="STRING" id="10090.ENSMUSP00000076514"/>
<dbReference type="GlyCosmos" id="Q6A051">
    <property type="glycosylation" value="8 sites, No reported glycans"/>
</dbReference>
<dbReference type="GlyGen" id="Q6A051">
    <property type="glycosylation" value="11 sites, 4 N-linked glycans (6 sites)"/>
</dbReference>
<dbReference type="PhosphoSitePlus" id="Q6A051"/>
<dbReference type="SwissPalm" id="Q6A051"/>
<dbReference type="PaxDb" id="10090-ENSMUSP00000076514"/>
<dbReference type="PeptideAtlas" id="Q6A051"/>
<dbReference type="ProteomicsDB" id="277196">
    <molecule id="Q6A051-1"/>
</dbReference>
<dbReference type="ProteomicsDB" id="277197">
    <molecule id="Q6A051-2"/>
</dbReference>
<dbReference type="ProteomicsDB" id="277198">
    <molecule id="Q6A051-3"/>
</dbReference>
<dbReference type="Pumba" id="Q6A051"/>
<dbReference type="Antibodypedia" id="52380">
    <property type="antibodies" value="29 antibodies from 12 providers"/>
</dbReference>
<dbReference type="DNASU" id="226255"/>
<dbReference type="Ensembl" id="ENSMUST00000077282.7">
    <molecule id="Q6A051-1"/>
    <property type="protein sequence ID" value="ENSMUSP00000076514.6"/>
    <property type="gene ID" value="ENSMUSG00000054843.10"/>
</dbReference>
<dbReference type="GeneID" id="226255"/>
<dbReference type="KEGG" id="mmu:226255"/>
<dbReference type="UCSC" id="uc008iai.2">
    <molecule id="Q6A051-1"/>
    <property type="organism name" value="mouse"/>
</dbReference>
<dbReference type="UCSC" id="uc008iaj.1">
    <molecule id="Q6A051-3"/>
    <property type="organism name" value="mouse"/>
</dbReference>
<dbReference type="AGR" id="MGI:2147749"/>
<dbReference type="CTD" id="26033"/>
<dbReference type="MGI" id="MGI:2147749">
    <property type="gene designation" value="Atrnl1"/>
</dbReference>
<dbReference type="VEuPathDB" id="HostDB:ENSMUSG00000054843"/>
<dbReference type="eggNOG" id="KOG1388">
    <property type="taxonomic scope" value="Eukaryota"/>
</dbReference>
<dbReference type="GeneTree" id="ENSGT00940000155790"/>
<dbReference type="HOGENOM" id="CLU_003930_0_0_1"/>
<dbReference type="InParanoid" id="Q6A051"/>
<dbReference type="OMA" id="CSMSVRN"/>
<dbReference type="OrthoDB" id="9998912at2759"/>
<dbReference type="PhylomeDB" id="Q6A051"/>
<dbReference type="TreeFam" id="TF321873"/>
<dbReference type="BioGRID-ORCS" id="226255">
    <property type="hits" value="0 hits in 79 CRISPR screens"/>
</dbReference>
<dbReference type="ChiTaRS" id="Atrnl1">
    <property type="organism name" value="mouse"/>
</dbReference>
<dbReference type="PRO" id="PR:Q6A051"/>
<dbReference type="Proteomes" id="UP000000589">
    <property type="component" value="Chromosome 19"/>
</dbReference>
<dbReference type="RNAct" id="Q6A051">
    <property type="molecule type" value="protein"/>
</dbReference>
<dbReference type="Bgee" id="ENSMUSG00000054843">
    <property type="expression patterns" value="Expressed in pigmented layer of retina and 230 other cell types or tissues"/>
</dbReference>
<dbReference type="GO" id="GO:0005886">
    <property type="term" value="C:plasma membrane"/>
    <property type="evidence" value="ECO:0007669"/>
    <property type="project" value="UniProtKB-SubCell"/>
</dbReference>
<dbReference type="GO" id="GO:0030246">
    <property type="term" value="F:carbohydrate binding"/>
    <property type="evidence" value="ECO:0007669"/>
    <property type="project" value="UniProtKB-KW"/>
</dbReference>
<dbReference type="GO" id="GO:0007186">
    <property type="term" value="P:G protein-coupled receptor signaling pathway"/>
    <property type="evidence" value="ECO:0000353"/>
    <property type="project" value="MGI"/>
</dbReference>
<dbReference type="CDD" id="cd03597">
    <property type="entry name" value="CLECT_attractin_like"/>
    <property type="match status" value="1"/>
</dbReference>
<dbReference type="CDD" id="cd00041">
    <property type="entry name" value="CUB"/>
    <property type="match status" value="1"/>
</dbReference>
<dbReference type="CDD" id="cd00055">
    <property type="entry name" value="EGF_Lam"/>
    <property type="match status" value="1"/>
</dbReference>
<dbReference type="FunFam" id="2.10.25.10:FF:000860">
    <property type="entry name" value="Attractin"/>
    <property type="match status" value="1"/>
</dbReference>
<dbReference type="FunFam" id="2.10.25.10:FF:000079">
    <property type="entry name" value="Attractin like 1"/>
    <property type="match status" value="1"/>
</dbReference>
<dbReference type="FunFam" id="2.120.10.80:FF:000022">
    <property type="entry name" value="Attractin like 1"/>
    <property type="match status" value="1"/>
</dbReference>
<dbReference type="FunFam" id="2.120.10.80:FF:000116">
    <property type="entry name" value="Attractin like 1"/>
    <property type="match status" value="1"/>
</dbReference>
<dbReference type="FunFam" id="2.60.120.290:FF:000008">
    <property type="entry name" value="Attractin like 1"/>
    <property type="match status" value="1"/>
</dbReference>
<dbReference type="FunFam" id="3.10.100.10:FF:000013">
    <property type="entry name" value="Attractin like 1"/>
    <property type="match status" value="1"/>
</dbReference>
<dbReference type="Gene3D" id="2.120.10.80">
    <property type="entry name" value="Kelch-type beta propeller"/>
    <property type="match status" value="2"/>
</dbReference>
<dbReference type="Gene3D" id="2.10.25.10">
    <property type="entry name" value="Laminin"/>
    <property type="match status" value="2"/>
</dbReference>
<dbReference type="Gene3D" id="3.10.100.10">
    <property type="entry name" value="Mannose-Binding Protein A, subunit A"/>
    <property type="match status" value="1"/>
</dbReference>
<dbReference type="Gene3D" id="2.60.120.290">
    <property type="entry name" value="Spermadhesin, CUB domain"/>
    <property type="match status" value="1"/>
</dbReference>
<dbReference type="InterPro" id="IPR034011">
    <property type="entry name" value="Attractin-like_CTLD"/>
</dbReference>
<dbReference type="InterPro" id="IPR056737">
    <property type="entry name" value="Beta-prop_ATRN-MKLN-like"/>
</dbReference>
<dbReference type="InterPro" id="IPR001304">
    <property type="entry name" value="C-type_lectin-like"/>
</dbReference>
<dbReference type="InterPro" id="IPR016186">
    <property type="entry name" value="C-type_lectin-like/link_sf"/>
</dbReference>
<dbReference type="InterPro" id="IPR016187">
    <property type="entry name" value="CTDL_fold"/>
</dbReference>
<dbReference type="InterPro" id="IPR000859">
    <property type="entry name" value="CUB_dom"/>
</dbReference>
<dbReference type="InterPro" id="IPR000742">
    <property type="entry name" value="EGF-like_dom"/>
</dbReference>
<dbReference type="InterPro" id="IPR056732">
    <property type="entry name" value="GBD_ATRN"/>
</dbReference>
<dbReference type="InterPro" id="IPR015915">
    <property type="entry name" value="Kelch-typ_b-propeller"/>
</dbReference>
<dbReference type="InterPro" id="IPR002049">
    <property type="entry name" value="LE_dom"/>
</dbReference>
<dbReference type="InterPro" id="IPR056863">
    <property type="entry name" value="LMN_ATRN_NET-like_EGF"/>
</dbReference>
<dbReference type="InterPro" id="IPR051568">
    <property type="entry name" value="LZTR1/Attractin"/>
</dbReference>
<dbReference type="InterPro" id="IPR002165">
    <property type="entry name" value="Plexin_repeat"/>
</dbReference>
<dbReference type="InterPro" id="IPR016201">
    <property type="entry name" value="PSI"/>
</dbReference>
<dbReference type="InterPro" id="IPR035914">
    <property type="entry name" value="Sperma_CUB_dom_sf"/>
</dbReference>
<dbReference type="PANTHER" id="PTHR46376:SF4">
    <property type="entry name" value="ATTRACTIN-LIKE PROTEIN 1"/>
    <property type="match status" value="1"/>
</dbReference>
<dbReference type="PANTHER" id="PTHR46376">
    <property type="entry name" value="LEUCINE-ZIPPER-LIKE TRANSCRIPTIONAL REGULATOR 1"/>
    <property type="match status" value="1"/>
</dbReference>
<dbReference type="Pfam" id="PF24981">
    <property type="entry name" value="Beta-prop_ATRN-LZTR1"/>
    <property type="match status" value="1"/>
</dbReference>
<dbReference type="Pfam" id="PF00431">
    <property type="entry name" value="CUB"/>
    <property type="match status" value="1"/>
</dbReference>
<dbReference type="Pfam" id="PF24973">
    <property type="entry name" value="EGF_LMN_ATRN"/>
    <property type="match status" value="1"/>
</dbReference>
<dbReference type="Pfam" id="PF23106">
    <property type="entry name" value="EGF_Teneurin"/>
    <property type="match status" value="1"/>
</dbReference>
<dbReference type="Pfam" id="PF24972">
    <property type="entry name" value="GBD_ATRN"/>
    <property type="match status" value="1"/>
</dbReference>
<dbReference type="Pfam" id="PF01437">
    <property type="entry name" value="PSI"/>
    <property type="match status" value="1"/>
</dbReference>
<dbReference type="SMART" id="SM00034">
    <property type="entry name" value="CLECT"/>
    <property type="match status" value="1"/>
</dbReference>
<dbReference type="SMART" id="SM00042">
    <property type="entry name" value="CUB"/>
    <property type="match status" value="1"/>
</dbReference>
<dbReference type="SMART" id="SM00181">
    <property type="entry name" value="EGF"/>
    <property type="match status" value="3"/>
</dbReference>
<dbReference type="SMART" id="SM00180">
    <property type="entry name" value="EGF_Lam"/>
    <property type="match status" value="1"/>
</dbReference>
<dbReference type="SMART" id="SM00423">
    <property type="entry name" value="PSI"/>
    <property type="match status" value="5"/>
</dbReference>
<dbReference type="SUPFAM" id="SSF56436">
    <property type="entry name" value="C-type lectin-like"/>
    <property type="match status" value="1"/>
</dbReference>
<dbReference type="SUPFAM" id="SSF57196">
    <property type="entry name" value="EGF/Laminin"/>
    <property type="match status" value="1"/>
</dbReference>
<dbReference type="SUPFAM" id="SSF117281">
    <property type="entry name" value="Kelch motif"/>
    <property type="match status" value="1"/>
</dbReference>
<dbReference type="SUPFAM" id="SSF49854">
    <property type="entry name" value="Spermadhesin, CUB domain"/>
    <property type="match status" value="1"/>
</dbReference>
<dbReference type="PROSITE" id="PS50041">
    <property type="entry name" value="C_TYPE_LECTIN_2"/>
    <property type="match status" value="1"/>
</dbReference>
<dbReference type="PROSITE" id="PS01180">
    <property type="entry name" value="CUB"/>
    <property type="match status" value="1"/>
</dbReference>
<dbReference type="PROSITE" id="PS00022">
    <property type="entry name" value="EGF_1"/>
    <property type="match status" value="3"/>
</dbReference>
<dbReference type="PROSITE" id="PS01186">
    <property type="entry name" value="EGF_2"/>
    <property type="match status" value="1"/>
</dbReference>
<dbReference type="PROSITE" id="PS50026">
    <property type="entry name" value="EGF_3"/>
    <property type="match status" value="2"/>
</dbReference>
<dbReference type="PROSITE" id="PS01248">
    <property type="entry name" value="EGF_LAM_1"/>
    <property type="match status" value="1"/>
</dbReference>
<dbReference type="PROSITE" id="PS50027">
    <property type="entry name" value="EGF_LAM_2"/>
    <property type="match status" value="2"/>
</dbReference>
<reference key="1">
    <citation type="submission" date="2004-07" db="EMBL/GenBank/DDBJ databases">
        <title>Identification of full-length mouse attractin-like protein (Atrnl).</title>
        <authorList>
            <person name="Duke-Cohan J.S."/>
        </authorList>
    </citation>
    <scope>NUCLEOTIDE SEQUENCE [MRNA] (ISOFORM 1)</scope>
    <source>
        <strain>C57BL/6J</strain>
    </source>
</reference>
<reference key="2">
    <citation type="journal article" date="2004" name="DNA Res.">
        <title>Prediction of the coding sequences of mouse homologues of KIAA gene: IV. The complete nucleotide sequences of 500 mouse KIAA-homologous cDNAs identified by screening of terminal sequences of cDNA clones randomly sampled from size-fractionated libraries.</title>
        <authorList>
            <person name="Okazaki N."/>
            <person name="Kikuno R."/>
            <person name="Ohara R."/>
            <person name="Inamoto S."/>
            <person name="Koseki H."/>
            <person name="Hiraoka S."/>
            <person name="Saga Y."/>
            <person name="Seino S."/>
            <person name="Nishimura M."/>
            <person name="Kaisho T."/>
            <person name="Hoshino K."/>
            <person name="Kitamura H."/>
            <person name="Nagase T."/>
            <person name="Ohara O."/>
            <person name="Koga H."/>
        </authorList>
    </citation>
    <scope>NUCLEOTIDE SEQUENCE [LARGE SCALE MRNA] (ISOFORM 1)</scope>
    <source>
        <tissue>Embryonic tail</tissue>
    </source>
</reference>
<reference key="3">
    <citation type="journal article" date="2005" name="Science">
        <title>The transcriptional landscape of the mammalian genome.</title>
        <authorList>
            <person name="Carninci P."/>
            <person name="Kasukawa T."/>
            <person name="Katayama S."/>
            <person name="Gough J."/>
            <person name="Frith M.C."/>
            <person name="Maeda N."/>
            <person name="Oyama R."/>
            <person name="Ravasi T."/>
            <person name="Lenhard B."/>
            <person name="Wells C."/>
            <person name="Kodzius R."/>
            <person name="Shimokawa K."/>
            <person name="Bajic V.B."/>
            <person name="Brenner S.E."/>
            <person name="Batalov S."/>
            <person name="Forrest A.R."/>
            <person name="Zavolan M."/>
            <person name="Davis M.J."/>
            <person name="Wilming L.G."/>
            <person name="Aidinis V."/>
            <person name="Allen J.E."/>
            <person name="Ambesi-Impiombato A."/>
            <person name="Apweiler R."/>
            <person name="Aturaliya R.N."/>
            <person name="Bailey T.L."/>
            <person name="Bansal M."/>
            <person name="Baxter L."/>
            <person name="Beisel K.W."/>
            <person name="Bersano T."/>
            <person name="Bono H."/>
            <person name="Chalk A.M."/>
            <person name="Chiu K.P."/>
            <person name="Choudhary V."/>
            <person name="Christoffels A."/>
            <person name="Clutterbuck D.R."/>
            <person name="Crowe M.L."/>
            <person name="Dalla E."/>
            <person name="Dalrymple B.P."/>
            <person name="de Bono B."/>
            <person name="Della Gatta G."/>
            <person name="di Bernardo D."/>
            <person name="Down T."/>
            <person name="Engstrom P."/>
            <person name="Fagiolini M."/>
            <person name="Faulkner G."/>
            <person name="Fletcher C.F."/>
            <person name="Fukushima T."/>
            <person name="Furuno M."/>
            <person name="Futaki S."/>
            <person name="Gariboldi M."/>
            <person name="Georgii-Hemming P."/>
            <person name="Gingeras T.R."/>
            <person name="Gojobori T."/>
            <person name="Green R.E."/>
            <person name="Gustincich S."/>
            <person name="Harbers M."/>
            <person name="Hayashi Y."/>
            <person name="Hensch T.K."/>
            <person name="Hirokawa N."/>
            <person name="Hill D."/>
            <person name="Huminiecki L."/>
            <person name="Iacono M."/>
            <person name="Ikeo K."/>
            <person name="Iwama A."/>
            <person name="Ishikawa T."/>
            <person name="Jakt M."/>
            <person name="Kanapin A."/>
            <person name="Katoh M."/>
            <person name="Kawasawa Y."/>
            <person name="Kelso J."/>
            <person name="Kitamura H."/>
            <person name="Kitano H."/>
            <person name="Kollias G."/>
            <person name="Krishnan S.P."/>
            <person name="Kruger A."/>
            <person name="Kummerfeld S.K."/>
            <person name="Kurochkin I.V."/>
            <person name="Lareau L.F."/>
            <person name="Lazarevic D."/>
            <person name="Lipovich L."/>
            <person name="Liu J."/>
            <person name="Liuni S."/>
            <person name="McWilliam S."/>
            <person name="Madan Babu M."/>
            <person name="Madera M."/>
            <person name="Marchionni L."/>
            <person name="Matsuda H."/>
            <person name="Matsuzawa S."/>
            <person name="Miki H."/>
            <person name="Mignone F."/>
            <person name="Miyake S."/>
            <person name="Morris K."/>
            <person name="Mottagui-Tabar S."/>
            <person name="Mulder N."/>
            <person name="Nakano N."/>
            <person name="Nakauchi H."/>
            <person name="Ng P."/>
            <person name="Nilsson R."/>
            <person name="Nishiguchi S."/>
            <person name="Nishikawa S."/>
            <person name="Nori F."/>
            <person name="Ohara O."/>
            <person name="Okazaki Y."/>
            <person name="Orlando V."/>
            <person name="Pang K.C."/>
            <person name="Pavan W.J."/>
            <person name="Pavesi G."/>
            <person name="Pesole G."/>
            <person name="Petrovsky N."/>
            <person name="Piazza S."/>
            <person name="Reed J."/>
            <person name="Reid J.F."/>
            <person name="Ring B.Z."/>
            <person name="Ringwald M."/>
            <person name="Rost B."/>
            <person name="Ruan Y."/>
            <person name="Salzberg S.L."/>
            <person name="Sandelin A."/>
            <person name="Schneider C."/>
            <person name="Schoenbach C."/>
            <person name="Sekiguchi K."/>
            <person name="Semple C.A."/>
            <person name="Seno S."/>
            <person name="Sessa L."/>
            <person name="Sheng Y."/>
            <person name="Shibata Y."/>
            <person name="Shimada H."/>
            <person name="Shimada K."/>
            <person name="Silva D."/>
            <person name="Sinclair B."/>
            <person name="Sperling S."/>
            <person name="Stupka E."/>
            <person name="Sugiura K."/>
            <person name="Sultana R."/>
            <person name="Takenaka Y."/>
            <person name="Taki K."/>
            <person name="Tammoja K."/>
            <person name="Tan S.L."/>
            <person name="Tang S."/>
            <person name="Taylor M.S."/>
            <person name="Tegner J."/>
            <person name="Teichmann S.A."/>
            <person name="Ueda H.R."/>
            <person name="van Nimwegen E."/>
            <person name="Verardo R."/>
            <person name="Wei C.L."/>
            <person name="Yagi K."/>
            <person name="Yamanishi H."/>
            <person name="Zabarovsky E."/>
            <person name="Zhu S."/>
            <person name="Zimmer A."/>
            <person name="Hide W."/>
            <person name="Bult C."/>
            <person name="Grimmond S.M."/>
            <person name="Teasdale R.D."/>
            <person name="Liu E.T."/>
            <person name="Brusic V."/>
            <person name="Quackenbush J."/>
            <person name="Wahlestedt C."/>
            <person name="Mattick J.S."/>
            <person name="Hume D.A."/>
            <person name="Kai C."/>
            <person name="Sasaki D."/>
            <person name="Tomaru Y."/>
            <person name="Fukuda S."/>
            <person name="Kanamori-Katayama M."/>
            <person name="Suzuki M."/>
            <person name="Aoki J."/>
            <person name="Arakawa T."/>
            <person name="Iida J."/>
            <person name="Imamura K."/>
            <person name="Itoh M."/>
            <person name="Kato T."/>
            <person name="Kawaji H."/>
            <person name="Kawagashira N."/>
            <person name="Kawashima T."/>
            <person name="Kojima M."/>
            <person name="Kondo S."/>
            <person name="Konno H."/>
            <person name="Nakano K."/>
            <person name="Ninomiya N."/>
            <person name="Nishio T."/>
            <person name="Okada M."/>
            <person name="Plessy C."/>
            <person name="Shibata K."/>
            <person name="Shiraki T."/>
            <person name="Suzuki S."/>
            <person name="Tagami M."/>
            <person name="Waki K."/>
            <person name="Watahiki A."/>
            <person name="Okamura-Oho Y."/>
            <person name="Suzuki H."/>
            <person name="Kawai J."/>
            <person name="Hayashizaki Y."/>
        </authorList>
    </citation>
    <scope>NUCLEOTIDE SEQUENCE [LARGE SCALE MRNA] (ISOFORM 1)</scope>
    <scope>NUCLEOTIDE SEQUENCE [LARGE SCALE MRNA] OF 690-1237 (ISOFORM 2)</scope>
    <source>
        <strain>C57BL/6J</strain>
    </source>
</reference>
<reference key="4">
    <citation type="journal article" date="2004" name="Genome Res.">
        <title>The status, quality, and expansion of the NIH full-length cDNA project: the Mammalian Gene Collection (MGC).</title>
        <authorList>
            <consortium name="The MGC Project Team"/>
        </authorList>
    </citation>
    <scope>NUCLEOTIDE SEQUENCE [LARGE SCALE MRNA] (ISOFORM 3)</scope>
    <scope>NUCLEOTIDE SEQUENCE [LARGE SCALE MRNA] OF 1002-1378 (ISOFORM 1)</scope>
    <source>
        <strain>Czech II</strain>
        <strain>FVB/N</strain>
        <tissue>Kidney</tissue>
        <tissue>Mammary tumor</tissue>
    </source>
</reference>
<reference key="5">
    <citation type="journal article" date="2003" name="Biochem. J.">
        <title>Characterization of a novel binding partner of the melanocortin-4 receptor: attractin-like protein.</title>
        <authorList>
            <person name="Haqq A.M."/>
            <person name="Rene P."/>
            <person name="Kishi T."/>
            <person name="Khong K."/>
            <person name="Lee C.E."/>
            <person name="Liu H."/>
            <person name="Friedman J.M."/>
            <person name="Elmquist J.K."/>
            <person name="Cone R.D."/>
        </authorList>
    </citation>
    <scope>INTERACTION WITH MC4R</scope>
</reference>
<reference key="6">
    <citation type="journal article" date="2007" name="Genesis">
        <title>Genetic analysis of attractin homologs.</title>
        <authorList>
            <person name="Walker W.P."/>
            <person name="Aradhya S."/>
            <person name="Hu C.-L."/>
            <person name="Shen S."/>
            <person name="Zhang W."/>
            <person name="Azarani A."/>
            <person name="Lu X."/>
            <person name="Barsh G.S."/>
            <person name="Gunn T.M."/>
        </authorList>
    </citation>
    <scope>DISRUPTION PHENOTYPE</scope>
    <scope>TISSUE SPECIFICITY</scope>
</reference>
<reference key="7">
    <citation type="journal article" date="2010" name="Cell">
        <title>A tissue-specific atlas of mouse protein phosphorylation and expression.</title>
        <authorList>
            <person name="Huttlin E.L."/>
            <person name="Jedrychowski M.P."/>
            <person name="Elias J.E."/>
            <person name="Goswami T."/>
            <person name="Rad R."/>
            <person name="Beausoleil S.A."/>
            <person name="Villen J."/>
            <person name="Haas W."/>
            <person name="Sowa M.E."/>
            <person name="Gygi S.P."/>
        </authorList>
    </citation>
    <scope>IDENTIFICATION BY MASS SPECTROMETRY [LARGE SCALE ANALYSIS]</scope>
    <source>
        <tissue>Brain</tissue>
    </source>
</reference>
<evidence type="ECO:0000250" key="1"/>
<evidence type="ECO:0000255" key="2"/>
<evidence type="ECO:0000255" key="3">
    <source>
        <dbReference type="PROSITE-ProRule" id="PRU00040"/>
    </source>
</evidence>
<evidence type="ECO:0000255" key="4">
    <source>
        <dbReference type="PROSITE-ProRule" id="PRU00059"/>
    </source>
</evidence>
<evidence type="ECO:0000255" key="5">
    <source>
        <dbReference type="PROSITE-ProRule" id="PRU00076"/>
    </source>
</evidence>
<evidence type="ECO:0000255" key="6">
    <source>
        <dbReference type="PROSITE-ProRule" id="PRU00460"/>
    </source>
</evidence>
<evidence type="ECO:0000256" key="7">
    <source>
        <dbReference type="SAM" id="MobiDB-lite"/>
    </source>
</evidence>
<evidence type="ECO:0000269" key="8">
    <source>
    </source>
</evidence>
<evidence type="ECO:0000269" key="9">
    <source>
    </source>
</evidence>
<evidence type="ECO:0000303" key="10">
    <source>
    </source>
</evidence>
<evidence type="ECO:0000303" key="11">
    <source>
    </source>
</evidence>
<evidence type="ECO:0000305" key="12"/>
<keyword id="KW-0025">Alternative splicing</keyword>
<keyword id="KW-1003">Cell membrane</keyword>
<keyword id="KW-1015">Disulfide bond</keyword>
<keyword id="KW-0245">EGF-like domain</keyword>
<keyword id="KW-0325">Glycoprotein</keyword>
<keyword id="KW-0880">Kelch repeat</keyword>
<keyword id="KW-0424">Laminin EGF-like domain</keyword>
<keyword id="KW-0430">Lectin</keyword>
<keyword id="KW-0472">Membrane</keyword>
<keyword id="KW-1185">Reference proteome</keyword>
<keyword id="KW-0677">Repeat</keyword>
<keyword id="KW-0732">Signal</keyword>
<keyword id="KW-0812">Transmembrane</keyword>
<keyword id="KW-1133">Transmembrane helix</keyword>
<proteinExistence type="evidence at protein level"/>
<name>ATRN1_MOUSE</name>
<accession>Q6A051</accession>
<accession>Q3UHB0</accession>
<accession>Q68HV2</accession>
<accession>Q80VI3</accession>
<accession>Q8BKS4</accession>
<accession>Q8K0P5</accession>
<feature type="signal peptide" evidence="2">
    <location>
        <begin position="1"/>
        <end position="51"/>
    </location>
</feature>
<feature type="chain" id="PRO_0000334651" description="Attractin-like protein 1">
    <location>
        <begin position="52"/>
        <end position="1378"/>
    </location>
</feature>
<feature type="topological domain" description="Extracellular" evidence="2">
    <location>
        <begin position="52"/>
        <end position="1229"/>
    </location>
</feature>
<feature type="transmembrane region" description="Helical" evidence="2">
    <location>
        <begin position="1230"/>
        <end position="1250"/>
    </location>
</feature>
<feature type="topological domain" description="Cytoplasmic" evidence="2">
    <location>
        <begin position="1251"/>
        <end position="1378"/>
    </location>
</feature>
<feature type="domain" description="EGF-like 1" evidence="5">
    <location>
        <begin position="52"/>
        <end position="90"/>
    </location>
</feature>
<feature type="domain" description="CUB" evidence="4">
    <location>
        <begin position="92"/>
        <end position="208"/>
    </location>
</feature>
<feature type="domain" description="EGF-like 2" evidence="5">
    <location>
        <begin position="206"/>
        <end position="244"/>
    </location>
</feature>
<feature type="repeat" description="Kelch 1">
    <location>
        <begin position="315"/>
        <end position="364"/>
    </location>
</feature>
<feature type="repeat" description="Kelch 2">
    <location>
        <begin position="366"/>
        <end position="414"/>
    </location>
</feature>
<feature type="repeat" description="Kelch 3">
    <location>
        <begin position="426"/>
        <end position="474"/>
    </location>
</feature>
<feature type="repeat" description="Kelch 4">
    <location>
        <begin position="479"/>
        <end position="530"/>
    </location>
</feature>
<feature type="repeat" description="Kelch 5">
    <location>
        <begin position="532"/>
        <end position="590"/>
    </location>
</feature>
<feature type="repeat" description="Kelch 6">
    <location>
        <begin position="591"/>
        <end position="637"/>
    </location>
</feature>
<feature type="domain" description="PSI 1">
    <location>
        <begin position="613"/>
        <end position="656"/>
    </location>
</feature>
<feature type="domain" description="PSI 2">
    <location>
        <begin position="665"/>
        <end position="708"/>
    </location>
</feature>
<feature type="domain" description="PSI 3">
    <location>
        <begin position="714"/>
        <end position="759"/>
    </location>
</feature>
<feature type="domain" description="C-type lectin" evidence="3">
    <location>
        <begin position="754"/>
        <end position="872"/>
    </location>
</feature>
<feature type="domain" description="PSI 4">
    <location>
        <begin position="888"/>
        <end position="938"/>
    </location>
</feature>
<feature type="domain" description="PSI 5">
    <location>
        <begin position="941"/>
        <end position="1011"/>
    </location>
</feature>
<feature type="domain" description="Laminin EGF-like 1" evidence="6">
    <location>
        <begin position="1013"/>
        <end position="1058"/>
    </location>
</feature>
<feature type="domain" description="Laminin EGF-like 2" evidence="6">
    <location>
        <begin position="1059"/>
        <end position="1107"/>
    </location>
</feature>
<feature type="region of interest" description="Interaction with MC4R" evidence="8">
    <location>
        <begin position="1287"/>
        <end position="1324"/>
    </location>
</feature>
<feature type="region of interest" description="Disordered" evidence="7">
    <location>
        <begin position="1351"/>
        <end position="1378"/>
    </location>
</feature>
<feature type="glycosylation site" description="N-linked (GlcNAc...) asparagine" evidence="2">
    <location>
        <position position="75"/>
    </location>
</feature>
<feature type="glycosylation site" description="N-linked (GlcNAc...) asparagine" evidence="2">
    <location>
        <position position="173"/>
    </location>
</feature>
<feature type="glycosylation site" description="N-linked (GlcNAc...) asparagine" evidence="2">
    <location>
        <position position="197"/>
    </location>
</feature>
<feature type="glycosylation site" description="N-linked (GlcNAc...) asparagine" evidence="2">
    <location>
        <position position="379"/>
    </location>
</feature>
<feature type="glycosylation site" description="N-linked (GlcNAc...) asparagine" evidence="2">
    <location>
        <position position="703"/>
    </location>
</feature>
<feature type="glycosylation site" description="N-linked (GlcNAc...) asparagine" evidence="2">
    <location>
        <position position="777"/>
    </location>
</feature>
<feature type="glycosylation site" description="N-linked (GlcNAc...) asparagine" evidence="2">
    <location>
        <position position="897"/>
    </location>
</feature>
<feature type="glycosylation site" description="N-linked (GlcNAc...) asparagine" evidence="2">
    <location>
        <position position="1156"/>
    </location>
</feature>
<feature type="disulfide bond" evidence="1">
    <location>
        <begin position="62"/>
        <end position="78"/>
    </location>
</feature>
<feature type="disulfide bond" evidence="1">
    <location>
        <begin position="80"/>
        <end position="89"/>
    </location>
</feature>
<feature type="disulfide bond" evidence="1">
    <location>
        <begin position="92"/>
        <end position="118"/>
    </location>
</feature>
<feature type="disulfide bond" evidence="1">
    <location>
        <begin position="210"/>
        <end position="220"/>
    </location>
</feature>
<feature type="disulfide bond" evidence="1">
    <location>
        <begin position="214"/>
        <end position="232"/>
    </location>
</feature>
<feature type="disulfide bond" evidence="1">
    <location>
        <begin position="234"/>
        <end position="243"/>
    </location>
</feature>
<feature type="disulfide bond" evidence="1">
    <location>
        <begin position="775"/>
        <end position="871"/>
    </location>
</feature>
<feature type="disulfide bond" evidence="1">
    <location>
        <begin position="1013"/>
        <end position="1021"/>
    </location>
</feature>
<feature type="disulfide bond" evidence="1">
    <location>
        <begin position="1015"/>
        <end position="1027"/>
    </location>
</feature>
<feature type="disulfide bond" evidence="1">
    <location>
        <begin position="1030"/>
        <end position="1039"/>
    </location>
</feature>
<feature type="disulfide bond" evidence="1">
    <location>
        <begin position="1042"/>
        <end position="1056"/>
    </location>
</feature>
<feature type="disulfide bond" evidence="1">
    <location>
        <begin position="1059"/>
        <end position="1068"/>
    </location>
</feature>
<feature type="disulfide bond" evidence="1">
    <location>
        <begin position="1061"/>
        <end position="1075"/>
    </location>
</feature>
<feature type="disulfide bond" evidence="1">
    <location>
        <begin position="1077"/>
        <end position="1087"/>
    </location>
</feature>
<feature type="disulfide bond" evidence="1">
    <location>
        <begin position="1090"/>
        <end position="1105"/>
    </location>
</feature>
<feature type="splice variant" id="VSP_033720" description="In isoform 3." evidence="10">
    <original>MEPGVRARSGAPQPASPVLWRARPAGGGGASSWLLLDGNSWLLCYGFLYLALYAQVSQSKPCERTGSCFSGRCVNSTCLCDPGWVGDQCQHCQGRFKLTEPSGYLTDGPINYKYKTKCTWLIEGYPNAVLRLRFNHFATECSWDHMYVYDGDSIYAPLVAVLSGLIVPEVRGNETVPEVVTTSGYALLHFFSDAAYNLTGFNIFYSINSCPNNCSGHGKCTTSVSVASQVYCECDKYWKGEACDIPYCKANCGSPDHGYCDLTGEKLCVCNDSWQGPDCSLNVPSTESYWILPNVKPFSPSVGRASHKAVLHGKFMWVIGGYTFNYSSFQMVLNYNLESSIWNVGAVSRGPLQRYGHSLALYQENIFMYGGRMETSDGNVTDELWVFNVRSQSWSTKTPTVLGHSQQYAVEGHSAHIMELDSRDVVMIVIFGYSAIYGYTSSIQEYHISSNTWLVPETKGAIVQGGYGHTSVYDEVTKSIYVHGGYKALPGNKYGLVDDLYKYEVNTRTWTILKESGFARYLHSAVLINGAMLIFGGNTHNDTSLSNGAKCFSADFLAYDI</original>
    <variation>MGWWTTSISTKSTPGL</variation>
    <location>
        <begin position="1"/>
        <end position="561"/>
    </location>
</feature>
<feature type="splice variant" id="VSP_033721" description="In isoform 3." evidence="10">
    <location>
        <begin position="1012"/>
        <end position="1057"/>
    </location>
</feature>
<feature type="splice variant" id="VSP_033722" description="In isoform 2." evidence="11">
    <original>CDSEN</original>
    <variation>YCQFF</variation>
    <location>
        <begin position="1090"/>
        <end position="1094"/>
    </location>
</feature>
<feature type="splice variant" id="VSP_033723" description="In isoform 2." evidence="11">
    <location>
        <begin position="1095"/>
        <end position="1378"/>
    </location>
</feature>
<feature type="sequence conflict" description="In Ref. 1; AAT99560." evidence="12" ref="1">
    <original>F</original>
    <variation>S</variation>
    <location>
        <position position="47"/>
    </location>
</feature>
<feature type="sequence conflict" description="In Ref. 4; AAH50020." evidence="12" ref="4">
    <original>R</original>
    <variation>K</variation>
    <location>
        <position position="851"/>
    </location>
</feature>
<feature type="sequence conflict" description="In Ref. 2; BAD32245." evidence="12" ref="2">
    <original>A</original>
    <variation>V</variation>
    <location>
        <position position="983"/>
    </location>
</feature>
<feature type="sequence conflict" description="In Ref. 4; AAH50020." evidence="12" ref="4">
    <original>E</original>
    <variation>D</variation>
    <location>
        <position position="1191"/>
    </location>
</feature>
<sequence>MEPGVRARSGAPQPASPVLWRARPAGGGGASSWLLLDGNSWLLCYGFLYLALYAQVSQSKPCERTGSCFSGRCVNSTCLCDPGWVGDQCQHCQGRFKLTEPSGYLTDGPINYKYKTKCTWLIEGYPNAVLRLRFNHFATECSWDHMYVYDGDSIYAPLVAVLSGLIVPEVRGNETVPEVVTTSGYALLHFFSDAAYNLTGFNIFYSINSCPNNCSGHGKCTTSVSVASQVYCECDKYWKGEACDIPYCKANCGSPDHGYCDLTGEKLCVCNDSWQGPDCSLNVPSTESYWILPNVKPFSPSVGRASHKAVLHGKFMWVIGGYTFNYSSFQMVLNYNLESSIWNVGAVSRGPLQRYGHSLALYQENIFMYGGRMETSDGNVTDELWVFNVRSQSWSTKTPTVLGHSQQYAVEGHSAHIMELDSRDVVMIVIFGYSAIYGYTSSIQEYHISSNTWLVPETKGAIVQGGYGHTSVYDEVTKSIYVHGGYKALPGNKYGLVDDLYKYEVNTRTWTILKESGFARYLHSAVLINGAMLIFGGNTHNDTSLSNGAKCFSADFLAYDIACDEWKTLPKPNLHRDVNRFGHSAVVINGSMYIFGGFSSVLLNDILVYKPPNCKAFRDEELCRNAGPGIKCVWNKNHCESWESGNTNNILRAKCPPKTAATDDRCYRYADCASCTANTNGCQWCDDKKCISASSNCSTSVRNYTKCHIRNEQICNKLTSCKSCSLNLNCQWDQRQQECQALPAHLCGEGWNHVGDACLRINSSRESYDNAKLYCYNLSGNLASLTTSKEVEFVLDEIQKFTQQKVSPWVGLRKINISYWGWEDMSPFTNTSLQWLPGEPNDSGFCAYLERAAVAGLKANPCTSMADGLVCEKPVVSPNQNARPCKKPCSLRTSCANCTSSGMECMWCSSTKRCVDSNAYIISFPYGQCLEWQTATCSPQNCSGLRTCGQCLEQPGCGWCNDPSNTGRGYCIEGSSRGPMKLAGVHNSDVVLDTSLCPKEKNYEWSFIQCPACQCNGHSTCINNNVCEQCKNLTTGRQCQECMPGYYGDPTNGGQCTACTCGGHANVCHLHTGKCFCTTKGIKGDQCQLCDSENRYVGNPLRGTCYYSLLIDYQFTFSLLQEDDRHHTAINFIANPEQSNKNLDISINASNNFNLNITWSVGSTGGTISGEETPIVSKTNIKEYRDSFSYEKFNFRSNPNITFYVYVSNFSWPIKIQIAFSQHNTIMDLVQFFVTFFSCFLSLLLVAAVVWKIKQTCWASRRREQLLRERQQMASRPFASVDVALEVGAEQTDFLRGPLEGAPKPIAIEPCAGNRAAVLTVFLCLPRGSSGAPPPGQSGLAIASALIDISQQKPSDNKDKTSGVRNRKHLSTRQGTCV</sequence>
<organism>
    <name type="scientific">Mus musculus</name>
    <name type="common">Mouse</name>
    <dbReference type="NCBI Taxonomy" id="10090"/>
    <lineage>
        <taxon>Eukaryota</taxon>
        <taxon>Metazoa</taxon>
        <taxon>Chordata</taxon>
        <taxon>Craniata</taxon>
        <taxon>Vertebrata</taxon>
        <taxon>Euteleostomi</taxon>
        <taxon>Mammalia</taxon>
        <taxon>Eutheria</taxon>
        <taxon>Euarchontoglires</taxon>
        <taxon>Glires</taxon>
        <taxon>Rodentia</taxon>
        <taxon>Myomorpha</taxon>
        <taxon>Muroidea</taxon>
        <taxon>Muridae</taxon>
        <taxon>Murinae</taxon>
        <taxon>Mus</taxon>
        <taxon>Mus</taxon>
    </lineage>
</organism>
<gene>
    <name type="primary">Atrnl1</name>
    <name type="synonym">Alp</name>
    <name type="synonym">Atrnl</name>
    <name type="synonym">Kiaa0534</name>
</gene>
<comment type="function">
    <text evidence="1">May play a role in melanocortin signaling pathways that regulate energy homeostasis.</text>
</comment>
<comment type="subunit">
    <text evidence="8">Interacts with MC4R.</text>
</comment>
<comment type="subcellular location">
    <subcellularLocation>
        <location evidence="12">Cell membrane</location>
        <topology evidence="12">Single-pass membrane protein</topology>
    </subcellularLocation>
</comment>
<comment type="alternative products">
    <event type="alternative splicing"/>
    <isoform>
        <id>Q6A051-1</id>
        <name>1</name>
        <sequence type="displayed"/>
    </isoform>
    <isoform>
        <id>Q6A051-2</id>
        <name>2</name>
        <sequence type="described" ref="VSP_033722 VSP_033723"/>
    </isoform>
    <isoform>
        <id>Q6A051-3</id>
        <name>3</name>
        <sequence type="described" ref="VSP_033720 VSP_033721"/>
    </isoform>
</comment>
<comment type="tissue specificity">
    <text evidence="9">Highly expressed in brain, heart, lung, kidney and liver. In the central nervous system, it is highly expressed in the dentate gyrus, CA1-3 regions of the hippocampus, and the ventral taenia tecta.</text>
</comment>
<comment type="disruption phenotype">
    <text evidence="9">Mice are grossly normal with no alterations of pigmentation, central nervous system pathology or body weight. In contrast, constitutive expression of Atrnl1 in mice lacking Atrn display normal, agouti-banded hairs and significantly delayed onset of spongiform neurodegeneration, indicating that overexpression of Atrnl1 compensates for loss of Atrn.</text>
</comment>
<comment type="sequence caution" evidence="12">
    <conflict type="erroneous initiation">
        <sequence resource="EMBL-CDS" id="BAD32245"/>
    </conflict>
</comment>